<accession>B3EDX3</accession>
<keyword id="KW-0028">Amino-acid biosynthesis</keyword>
<keyword id="KW-0963">Cytoplasm</keyword>
<keyword id="KW-0368">Histidine biosynthesis</keyword>
<keyword id="KW-0456">Lyase</keyword>
<evidence type="ECO:0000255" key="1">
    <source>
        <dbReference type="HAMAP-Rule" id="MF_00076"/>
    </source>
</evidence>
<dbReference type="EC" id="4.2.1.19" evidence="1"/>
<dbReference type="EMBL" id="CP001097">
    <property type="protein sequence ID" value="ACD90675.1"/>
    <property type="molecule type" value="Genomic_DNA"/>
</dbReference>
<dbReference type="RefSeq" id="WP_012466548.1">
    <property type="nucleotide sequence ID" value="NC_010803.1"/>
</dbReference>
<dbReference type="SMR" id="B3EDX3"/>
<dbReference type="STRING" id="290315.Clim_1631"/>
<dbReference type="KEGG" id="cli:Clim_1631"/>
<dbReference type="eggNOG" id="COG0131">
    <property type="taxonomic scope" value="Bacteria"/>
</dbReference>
<dbReference type="HOGENOM" id="CLU_044308_3_0_10"/>
<dbReference type="OrthoDB" id="9790411at2"/>
<dbReference type="UniPathway" id="UPA00031">
    <property type="reaction ID" value="UER00011"/>
</dbReference>
<dbReference type="Proteomes" id="UP000008841">
    <property type="component" value="Chromosome"/>
</dbReference>
<dbReference type="GO" id="GO:0005737">
    <property type="term" value="C:cytoplasm"/>
    <property type="evidence" value="ECO:0007669"/>
    <property type="project" value="UniProtKB-SubCell"/>
</dbReference>
<dbReference type="GO" id="GO:0004424">
    <property type="term" value="F:imidazoleglycerol-phosphate dehydratase activity"/>
    <property type="evidence" value="ECO:0007669"/>
    <property type="project" value="UniProtKB-UniRule"/>
</dbReference>
<dbReference type="GO" id="GO:0000105">
    <property type="term" value="P:L-histidine biosynthetic process"/>
    <property type="evidence" value="ECO:0007669"/>
    <property type="project" value="UniProtKB-UniRule"/>
</dbReference>
<dbReference type="CDD" id="cd07914">
    <property type="entry name" value="IGPD"/>
    <property type="match status" value="1"/>
</dbReference>
<dbReference type="FunFam" id="3.30.230.40:FF:000001">
    <property type="entry name" value="Imidazoleglycerol-phosphate dehydratase HisB"/>
    <property type="match status" value="1"/>
</dbReference>
<dbReference type="FunFam" id="3.30.230.40:FF:000003">
    <property type="entry name" value="Imidazoleglycerol-phosphate dehydratase HisB"/>
    <property type="match status" value="1"/>
</dbReference>
<dbReference type="Gene3D" id="3.30.230.40">
    <property type="entry name" value="Imidazole glycerol phosphate dehydratase, domain 1"/>
    <property type="match status" value="2"/>
</dbReference>
<dbReference type="HAMAP" id="MF_00076">
    <property type="entry name" value="HisB"/>
    <property type="match status" value="1"/>
</dbReference>
<dbReference type="InterPro" id="IPR038494">
    <property type="entry name" value="IGPD_sf"/>
</dbReference>
<dbReference type="InterPro" id="IPR000807">
    <property type="entry name" value="ImidazoleglycerolP_deHydtase"/>
</dbReference>
<dbReference type="InterPro" id="IPR020565">
    <property type="entry name" value="ImidazoleglycerP_deHydtase_CS"/>
</dbReference>
<dbReference type="InterPro" id="IPR020568">
    <property type="entry name" value="Ribosomal_Su5_D2-typ_SF"/>
</dbReference>
<dbReference type="NCBIfam" id="NF002111">
    <property type="entry name" value="PRK00951.2-1"/>
    <property type="match status" value="1"/>
</dbReference>
<dbReference type="NCBIfam" id="NF002114">
    <property type="entry name" value="PRK00951.2-4"/>
    <property type="match status" value="1"/>
</dbReference>
<dbReference type="PANTHER" id="PTHR23133:SF2">
    <property type="entry name" value="IMIDAZOLEGLYCEROL-PHOSPHATE DEHYDRATASE"/>
    <property type="match status" value="1"/>
</dbReference>
<dbReference type="PANTHER" id="PTHR23133">
    <property type="entry name" value="IMIDAZOLEGLYCEROL-PHOSPHATE DEHYDRATASE HIS7"/>
    <property type="match status" value="1"/>
</dbReference>
<dbReference type="Pfam" id="PF00475">
    <property type="entry name" value="IGPD"/>
    <property type="match status" value="1"/>
</dbReference>
<dbReference type="SUPFAM" id="SSF54211">
    <property type="entry name" value="Ribosomal protein S5 domain 2-like"/>
    <property type="match status" value="2"/>
</dbReference>
<dbReference type="PROSITE" id="PS00954">
    <property type="entry name" value="IGP_DEHYDRATASE_1"/>
    <property type="match status" value="1"/>
</dbReference>
<dbReference type="PROSITE" id="PS00955">
    <property type="entry name" value="IGP_DEHYDRATASE_2"/>
    <property type="match status" value="1"/>
</dbReference>
<sequence>MPEKLNTSARRATVTRTTKETDITATIDLDGSGTGNISSGVLFLDHMLTNFSRHSGIDITLDCKGDTEVDDHHSVEDIALVLGSAFLQSLGSKTGIQRYGWAMIPMDETLARCAVDLGGRSYCVFSAEFKRPAILGFSTEMVEHFFVSLSRTMQANIHLAIMEGKNTHHMIEAMFKAFAYAMKMAVAVTGKELPSTKGTL</sequence>
<reference key="1">
    <citation type="submission" date="2008-05" db="EMBL/GenBank/DDBJ databases">
        <title>Complete sequence of Chlorobium limicola DSM 245.</title>
        <authorList>
            <consortium name="US DOE Joint Genome Institute"/>
            <person name="Lucas S."/>
            <person name="Copeland A."/>
            <person name="Lapidus A."/>
            <person name="Glavina del Rio T."/>
            <person name="Dalin E."/>
            <person name="Tice H."/>
            <person name="Bruce D."/>
            <person name="Goodwin L."/>
            <person name="Pitluck S."/>
            <person name="Schmutz J."/>
            <person name="Larimer F."/>
            <person name="Land M."/>
            <person name="Hauser L."/>
            <person name="Kyrpides N."/>
            <person name="Ovchinnikova G."/>
            <person name="Zhao F."/>
            <person name="Li T."/>
            <person name="Liu Z."/>
            <person name="Overmann J."/>
            <person name="Bryant D.A."/>
            <person name="Richardson P."/>
        </authorList>
    </citation>
    <scope>NUCLEOTIDE SEQUENCE [LARGE SCALE GENOMIC DNA]</scope>
    <source>
        <strain>DSM 245 / NBRC 103803 / 6330</strain>
    </source>
</reference>
<protein>
    <recommendedName>
        <fullName evidence="1">Imidazoleglycerol-phosphate dehydratase</fullName>
        <shortName evidence="1">IGPD</shortName>
        <ecNumber evidence="1">4.2.1.19</ecNumber>
    </recommendedName>
</protein>
<feature type="chain" id="PRO_1000092681" description="Imidazoleglycerol-phosphate dehydratase">
    <location>
        <begin position="1"/>
        <end position="200"/>
    </location>
</feature>
<proteinExistence type="inferred from homology"/>
<organism>
    <name type="scientific">Chlorobium limicola (strain DSM 245 / NBRC 103803 / 6330)</name>
    <dbReference type="NCBI Taxonomy" id="290315"/>
    <lineage>
        <taxon>Bacteria</taxon>
        <taxon>Pseudomonadati</taxon>
        <taxon>Chlorobiota</taxon>
        <taxon>Chlorobiia</taxon>
        <taxon>Chlorobiales</taxon>
        <taxon>Chlorobiaceae</taxon>
        <taxon>Chlorobium/Pelodictyon group</taxon>
        <taxon>Chlorobium</taxon>
    </lineage>
</organism>
<gene>
    <name evidence="1" type="primary">hisB</name>
    <name type="ordered locus">Clim_1631</name>
</gene>
<comment type="catalytic activity">
    <reaction evidence="1">
        <text>D-erythro-1-(imidazol-4-yl)glycerol 3-phosphate = 3-(imidazol-4-yl)-2-oxopropyl phosphate + H2O</text>
        <dbReference type="Rhea" id="RHEA:11040"/>
        <dbReference type="ChEBI" id="CHEBI:15377"/>
        <dbReference type="ChEBI" id="CHEBI:57766"/>
        <dbReference type="ChEBI" id="CHEBI:58278"/>
        <dbReference type="EC" id="4.2.1.19"/>
    </reaction>
</comment>
<comment type="pathway">
    <text evidence="1">Amino-acid biosynthesis; L-histidine biosynthesis; L-histidine from 5-phospho-alpha-D-ribose 1-diphosphate: step 6/9.</text>
</comment>
<comment type="subcellular location">
    <subcellularLocation>
        <location evidence="1">Cytoplasm</location>
    </subcellularLocation>
</comment>
<comment type="similarity">
    <text evidence="1">Belongs to the imidazoleglycerol-phosphate dehydratase family.</text>
</comment>
<name>HIS7_CHLL2</name>